<reference key="1">
    <citation type="journal article" date="2008" name="ISME J.">
        <title>Comparative genomics of two ecotypes of the marine planktonic copiotroph Alteromonas macleodii suggests alternative lifestyles associated with different kinds of particulate organic matter.</title>
        <authorList>
            <person name="Ivars-Martinez E."/>
            <person name="Martin-Cuadrado A.-B."/>
            <person name="D'Auria G."/>
            <person name="Mira A."/>
            <person name="Ferriera S."/>
            <person name="Johnson J."/>
            <person name="Friedman R."/>
            <person name="Rodriguez-Valera F."/>
        </authorList>
    </citation>
    <scope>NUCLEOTIDE SEQUENCE [LARGE SCALE GENOMIC DNA]</scope>
    <source>
        <strain>DSM 17117 / CIP 110805 / LMG 28347 / Deep ecotype</strain>
    </source>
</reference>
<sequence>MIVSTTPTLEGHKIDAYYGIVVGEAVMGANVFKDLFASIRDIVGGRSGSYEEELTTARKLAFTELEHEARSMGANAVVGIDLDYQVIGDKGSMLMVSISGTAVKTSPL</sequence>
<evidence type="ECO:0000255" key="1">
    <source>
        <dbReference type="HAMAP-Rule" id="MF_00338"/>
    </source>
</evidence>
<gene>
    <name type="ordered locus">MADE_1007770</name>
</gene>
<protein>
    <recommendedName>
        <fullName evidence="1">UPF0145 protein MADE_1007770</fullName>
    </recommendedName>
</protein>
<comment type="similarity">
    <text evidence="1">Belongs to the UPF0145 family.</text>
</comment>
<organism>
    <name type="scientific">Alteromonas mediterranea (strain DSM 17117 / CIP 110805 / LMG 28347 / Deep ecotype)</name>
    <dbReference type="NCBI Taxonomy" id="1774373"/>
    <lineage>
        <taxon>Bacteria</taxon>
        <taxon>Pseudomonadati</taxon>
        <taxon>Pseudomonadota</taxon>
        <taxon>Gammaproteobacteria</taxon>
        <taxon>Alteromonadales</taxon>
        <taxon>Alteromonadaceae</taxon>
        <taxon>Alteromonas/Salinimonas group</taxon>
        <taxon>Alteromonas</taxon>
    </lineage>
</organism>
<feature type="chain" id="PRO_1000119978" description="UPF0145 protein MADE_1007770">
    <location>
        <begin position="1"/>
        <end position="108"/>
    </location>
</feature>
<name>Y2548_ALTMD</name>
<accession>B4RST1</accession>
<accession>F2G7P4</accession>
<dbReference type="EMBL" id="CP001103">
    <property type="protein sequence ID" value="AEA97694.1"/>
    <property type="molecule type" value="Genomic_DNA"/>
</dbReference>
<dbReference type="RefSeq" id="WP_012518028.1">
    <property type="nucleotide sequence ID" value="NC_011138.3"/>
</dbReference>
<dbReference type="SMR" id="B4RST1"/>
<dbReference type="KEGG" id="amc:MADE_1007770"/>
<dbReference type="HOGENOM" id="CLU_117144_3_2_6"/>
<dbReference type="Proteomes" id="UP000001870">
    <property type="component" value="Chromosome"/>
</dbReference>
<dbReference type="Gene3D" id="3.30.110.70">
    <property type="entry name" value="Hypothetical protein apc22750. Chain B"/>
    <property type="match status" value="1"/>
</dbReference>
<dbReference type="HAMAP" id="MF_00338">
    <property type="entry name" value="UPF0145"/>
    <property type="match status" value="1"/>
</dbReference>
<dbReference type="InterPro" id="IPR035439">
    <property type="entry name" value="UPF0145_dom_sf"/>
</dbReference>
<dbReference type="InterPro" id="IPR002765">
    <property type="entry name" value="UPF0145_YbjQ-like"/>
</dbReference>
<dbReference type="NCBIfam" id="NF002776">
    <property type="entry name" value="PRK02877.1"/>
    <property type="match status" value="1"/>
</dbReference>
<dbReference type="PANTHER" id="PTHR34068">
    <property type="entry name" value="UPF0145 PROTEIN YBJQ"/>
    <property type="match status" value="1"/>
</dbReference>
<dbReference type="PANTHER" id="PTHR34068:SF1">
    <property type="entry name" value="UPF0145 PROTEIN YBJQ"/>
    <property type="match status" value="1"/>
</dbReference>
<dbReference type="Pfam" id="PF01906">
    <property type="entry name" value="YbjQ_1"/>
    <property type="match status" value="1"/>
</dbReference>
<dbReference type="SUPFAM" id="SSF117782">
    <property type="entry name" value="YbjQ-like"/>
    <property type="match status" value="1"/>
</dbReference>
<proteinExistence type="inferred from homology"/>